<gene>
    <name evidence="1" type="primary">trpD</name>
    <name type="ordered locus">PTH_1626</name>
</gene>
<evidence type="ECO:0000255" key="1">
    <source>
        <dbReference type="HAMAP-Rule" id="MF_00211"/>
    </source>
</evidence>
<organism>
    <name type="scientific">Pelotomaculum thermopropionicum (strain DSM 13744 / JCM 10971 / SI)</name>
    <dbReference type="NCBI Taxonomy" id="370438"/>
    <lineage>
        <taxon>Bacteria</taxon>
        <taxon>Bacillati</taxon>
        <taxon>Bacillota</taxon>
        <taxon>Clostridia</taxon>
        <taxon>Eubacteriales</taxon>
        <taxon>Desulfotomaculaceae</taxon>
        <taxon>Pelotomaculum</taxon>
    </lineage>
</organism>
<sequence length="345" mass="35864">MIKNAIKKVVSGQHLSEEEAGAVMEQIMEGGASPAQIASLLTAMRLKGETVDEITGFARVMRQKSTRVKSKHPVLVDTCGTGGDGAGTFNISTAAAFVVAGAGVPVAKHGNRSVSSRCGSADVLEELGVRVDLDREAVEECLNMVGMAFLFAPLLHRSMGYVAGPRREIGIRTVFNILGPLTNPAGANAQVLGVYSPFLAEMLAKVLARLGVSRAFVVHGAGGLDEISLAGPSILCEVRNGSVRRGLLDPARFGFRYAPVSVLAGGTPRENAAIALKILEGERGARRDVVVLNAALGLVAGGKARNIAEGLEIAALSIDSGLAVAKLRELVEFTGNLSCGEAAVR</sequence>
<reference key="1">
    <citation type="journal article" date="2008" name="Genome Res.">
        <title>The genome of Pelotomaculum thermopropionicum reveals niche-associated evolution in anaerobic microbiota.</title>
        <authorList>
            <person name="Kosaka T."/>
            <person name="Kato S."/>
            <person name="Shimoyama T."/>
            <person name="Ishii S."/>
            <person name="Abe T."/>
            <person name="Watanabe K."/>
        </authorList>
    </citation>
    <scope>NUCLEOTIDE SEQUENCE [LARGE SCALE GENOMIC DNA]</scope>
    <source>
        <strain>DSM 13744 / JCM 10971 / SI</strain>
    </source>
</reference>
<dbReference type="EC" id="2.4.2.18" evidence="1"/>
<dbReference type="EMBL" id="AP009389">
    <property type="protein sequence ID" value="BAF59807.1"/>
    <property type="molecule type" value="Genomic_DNA"/>
</dbReference>
<dbReference type="SMR" id="A5D1S5"/>
<dbReference type="STRING" id="370438.PTH_1626"/>
<dbReference type="KEGG" id="pth:PTH_1626"/>
<dbReference type="eggNOG" id="COG0547">
    <property type="taxonomic scope" value="Bacteria"/>
</dbReference>
<dbReference type="HOGENOM" id="CLU_034315_2_1_9"/>
<dbReference type="UniPathway" id="UPA00035">
    <property type="reaction ID" value="UER00041"/>
</dbReference>
<dbReference type="Proteomes" id="UP000006556">
    <property type="component" value="Chromosome"/>
</dbReference>
<dbReference type="GO" id="GO:0005829">
    <property type="term" value="C:cytosol"/>
    <property type="evidence" value="ECO:0007669"/>
    <property type="project" value="TreeGrafter"/>
</dbReference>
<dbReference type="GO" id="GO:0004048">
    <property type="term" value="F:anthranilate phosphoribosyltransferase activity"/>
    <property type="evidence" value="ECO:0007669"/>
    <property type="project" value="UniProtKB-UniRule"/>
</dbReference>
<dbReference type="GO" id="GO:0000287">
    <property type="term" value="F:magnesium ion binding"/>
    <property type="evidence" value="ECO:0007669"/>
    <property type="project" value="UniProtKB-UniRule"/>
</dbReference>
<dbReference type="GO" id="GO:0000162">
    <property type="term" value="P:L-tryptophan biosynthetic process"/>
    <property type="evidence" value="ECO:0007669"/>
    <property type="project" value="UniProtKB-UniRule"/>
</dbReference>
<dbReference type="FunFam" id="1.20.970.10:FF:000006">
    <property type="entry name" value="Anthranilate phosphoribosyltransferase"/>
    <property type="match status" value="1"/>
</dbReference>
<dbReference type="FunFam" id="3.40.1030.10:FF:000002">
    <property type="entry name" value="Anthranilate phosphoribosyltransferase"/>
    <property type="match status" value="1"/>
</dbReference>
<dbReference type="Gene3D" id="3.40.1030.10">
    <property type="entry name" value="Nucleoside phosphorylase/phosphoribosyltransferase catalytic domain"/>
    <property type="match status" value="1"/>
</dbReference>
<dbReference type="Gene3D" id="1.20.970.10">
    <property type="entry name" value="Transferase, Pyrimidine Nucleoside Phosphorylase, Chain C"/>
    <property type="match status" value="1"/>
</dbReference>
<dbReference type="HAMAP" id="MF_00211">
    <property type="entry name" value="TrpD"/>
    <property type="match status" value="1"/>
</dbReference>
<dbReference type="InterPro" id="IPR005940">
    <property type="entry name" value="Anthranilate_Pribosyl_Tfrase"/>
</dbReference>
<dbReference type="InterPro" id="IPR000312">
    <property type="entry name" value="Glycosyl_Trfase_fam3"/>
</dbReference>
<dbReference type="InterPro" id="IPR017459">
    <property type="entry name" value="Glycosyl_Trfase_fam3_N_dom"/>
</dbReference>
<dbReference type="InterPro" id="IPR036320">
    <property type="entry name" value="Glycosyl_Trfase_fam3_N_dom_sf"/>
</dbReference>
<dbReference type="InterPro" id="IPR035902">
    <property type="entry name" value="Nuc_phospho_transferase"/>
</dbReference>
<dbReference type="NCBIfam" id="TIGR01245">
    <property type="entry name" value="trpD"/>
    <property type="match status" value="1"/>
</dbReference>
<dbReference type="PANTHER" id="PTHR43285">
    <property type="entry name" value="ANTHRANILATE PHOSPHORIBOSYLTRANSFERASE"/>
    <property type="match status" value="1"/>
</dbReference>
<dbReference type="PANTHER" id="PTHR43285:SF2">
    <property type="entry name" value="ANTHRANILATE PHOSPHORIBOSYLTRANSFERASE"/>
    <property type="match status" value="1"/>
</dbReference>
<dbReference type="Pfam" id="PF02885">
    <property type="entry name" value="Glycos_trans_3N"/>
    <property type="match status" value="1"/>
</dbReference>
<dbReference type="Pfam" id="PF00591">
    <property type="entry name" value="Glycos_transf_3"/>
    <property type="match status" value="1"/>
</dbReference>
<dbReference type="SUPFAM" id="SSF52418">
    <property type="entry name" value="Nucleoside phosphorylase/phosphoribosyltransferase catalytic domain"/>
    <property type="match status" value="1"/>
</dbReference>
<dbReference type="SUPFAM" id="SSF47648">
    <property type="entry name" value="Nucleoside phosphorylase/phosphoribosyltransferase N-terminal domain"/>
    <property type="match status" value="1"/>
</dbReference>
<name>TRPD_PELTS</name>
<comment type="function">
    <text evidence="1">Catalyzes the transfer of the phosphoribosyl group of 5-phosphorylribose-1-pyrophosphate (PRPP) to anthranilate to yield N-(5'-phosphoribosyl)-anthranilate (PRA).</text>
</comment>
<comment type="catalytic activity">
    <reaction evidence="1">
        <text>N-(5-phospho-beta-D-ribosyl)anthranilate + diphosphate = 5-phospho-alpha-D-ribose 1-diphosphate + anthranilate</text>
        <dbReference type="Rhea" id="RHEA:11768"/>
        <dbReference type="ChEBI" id="CHEBI:16567"/>
        <dbReference type="ChEBI" id="CHEBI:18277"/>
        <dbReference type="ChEBI" id="CHEBI:33019"/>
        <dbReference type="ChEBI" id="CHEBI:58017"/>
        <dbReference type="EC" id="2.4.2.18"/>
    </reaction>
</comment>
<comment type="cofactor">
    <cofactor evidence="1">
        <name>Mg(2+)</name>
        <dbReference type="ChEBI" id="CHEBI:18420"/>
    </cofactor>
    <text evidence="1">Binds 2 magnesium ions per monomer.</text>
</comment>
<comment type="pathway">
    <text evidence="1">Amino-acid biosynthesis; L-tryptophan biosynthesis; L-tryptophan from chorismate: step 2/5.</text>
</comment>
<comment type="subunit">
    <text evidence="1">Homodimer.</text>
</comment>
<comment type="similarity">
    <text evidence="1">Belongs to the anthranilate phosphoribosyltransferase family.</text>
</comment>
<keyword id="KW-0028">Amino-acid biosynthesis</keyword>
<keyword id="KW-0057">Aromatic amino acid biosynthesis</keyword>
<keyword id="KW-0328">Glycosyltransferase</keyword>
<keyword id="KW-0460">Magnesium</keyword>
<keyword id="KW-0479">Metal-binding</keyword>
<keyword id="KW-1185">Reference proteome</keyword>
<keyword id="KW-0808">Transferase</keyword>
<keyword id="KW-0822">Tryptophan biosynthesis</keyword>
<protein>
    <recommendedName>
        <fullName evidence="1">Anthranilate phosphoribosyltransferase</fullName>
        <ecNumber evidence="1">2.4.2.18</ecNumber>
    </recommendedName>
</protein>
<proteinExistence type="inferred from homology"/>
<feature type="chain" id="PRO_1000078020" description="Anthranilate phosphoribosyltransferase">
    <location>
        <begin position="1"/>
        <end position="345"/>
    </location>
</feature>
<feature type="binding site" evidence="1">
    <location>
        <position position="80"/>
    </location>
    <ligand>
        <name>5-phospho-alpha-D-ribose 1-diphosphate</name>
        <dbReference type="ChEBI" id="CHEBI:58017"/>
    </ligand>
</feature>
<feature type="binding site" evidence="1">
    <location>
        <position position="80"/>
    </location>
    <ligand>
        <name>anthranilate</name>
        <dbReference type="ChEBI" id="CHEBI:16567"/>
        <label>1</label>
    </ligand>
</feature>
<feature type="binding site" evidence="1">
    <location>
        <begin position="83"/>
        <end position="84"/>
    </location>
    <ligand>
        <name>5-phospho-alpha-D-ribose 1-diphosphate</name>
        <dbReference type="ChEBI" id="CHEBI:58017"/>
    </ligand>
</feature>
<feature type="binding site" evidence="1">
    <location>
        <position position="88"/>
    </location>
    <ligand>
        <name>5-phospho-alpha-D-ribose 1-diphosphate</name>
        <dbReference type="ChEBI" id="CHEBI:58017"/>
    </ligand>
</feature>
<feature type="binding site" evidence="1">
    <location>
        <begin position="90"/>
        <end position="93"/>
    </location>
    <ligand>
        <name>5-phospho-alpha-D-ribose 1-diphosphate</name>
        <dbReference type="ChEBI" id="CHEBI:58017"/>
    </ligand>
</feature>
<feature type="binding site" evidence="1">
    <location>
        <position position="92"/>
    </location>
    <ligand>
        <name>Mg(2+)</name>
        <dbReference type="ChEBI" id="CHEBI:18420"/>
        <label>1</label>
    </ligand>
</feature>
<feature type="binding site" evidence="1">
    <location>
        <begin position="108"/>
        <end position="116"/>
    </location>
    <ligand>
        <name>5-phospho-alpha-D-ribose 1-diphosphate</name>
        <dbReference type="ChEBI" id="CHEBI:58017"/>
    </ligand>
</feature>
<feature type="binding site" evidence="1">
    <location>
        <position position="111"/>
    </location>
    <ligand>
        <name>anthranilate</name>
        <dbReference type="ChEBI" id="CHEBI:16567"/>
        <label>1</label>
    </ligand>
</feature>
<feature type="binding site" evidence="1">
    <location>
        <position position="120"/>
    </location>
    <ligand>
        <name>5-phospho-alpha-D-ribose 1-diphosphate</name>
        <dbReference type="ChEBI" id="CHEBI:58017"/>
    </ligand>
</feature>
<feature type="binding site" evidence="1">
    <location>
        <position position="166"/>
    </location>
    <ligand>
        <name>anthranilate</name>
        <dbReference type="ChEBI" id="CHEBI:16567"/>
        <label>2</label>
    </ligand>
</feature>
<feature type="binding site" evidence="1">
    <location>
        <position position="225"/>
    </location>
    <ligand>
        <name>Mg(2+)</name>
        <dbReference type="ChEBI" id="CHEBI:18420"/>
        <label>2</label>
    </ligand>
</feature>
<feature type="binding site" evidence="1">
    <location>
        <position position="226"/>
    </location>
    <ligand>
        <name>Mg(2+)</name>
        <dbReference type="ChEBI" id="CHEBI:18420"/>
        <label>1</label>
    </ligand>
</feature>
<feature type="binding site" evidence="1">
    <location>
        <position position="226"/>
    </location>
    <ligand>
        <name>Mg(2+)</name>
        <dbReference type="ChEBI" id="CHEBI:18420"/>
        <label>2</label>
    </ligand>
</feature>
<accession>A5D1S5</accession>